<feature type="signal peptide" evidence="1">
    <location>
        <begin position="1"/>
        <end position="19"/>
    </location>
</feature>
<feature type="chain" id="PRO_0000422402" description="Acetylxylan esterase">
    <location>
        <begin position="20"/>
        <end position="480"/>
    </location>
</feature>
<comment type="function">
    <text evidence="3">Involved in degradation of plant cell wall polysaccharides. Is an acetyl esterase with broad substrate specificity, releasing acetic acid from acetylated xylo-oligosaccharides and acetylated xylan as well as xylose-tetraacetate, 4-O-methylumbelliferyl acetate, glucose-pentaacetate, and cephalosporin C. Appears to have greater activity on oligosaccharides than on polymeric substrates. Is also able to release acetic acid from xylo-oligosaccharides with 4-O-methylglucuronic acid side groups proximally located to O-acetyl esters. Preferentially targets xylo-oligosaccharides possessing three or more O-acetyl groups, but following their depletion it is active on the less acetylated portion of the substrate.</text>
</comment>
<comment type="catalytic activity">
    <reaction evidence="3">
        <text>Deacetylation of xylans and xylo-oligosaccharides.</text>
        <dbReference type="EC" id="3.1.1.72"/>
    </reaction>
</comment>
<comment type="biophysicochemical properties">
    <phDependence>
        <text evidence="3">Optimum pH is 6.0 with glucose-pentaacetate as substrate. Active from pH 5.0 to 8.0.</text>
    </phDependence>
    <temperatureDependence>
        <text evidence="3">Optimum temperature is 30 to 35 degrees Celsius with glucose-pentaacetate as substrate. Active from 20 to 50 degrees Celsius. Still exhibits 40 to 70% of the maximum activity after 20 hours of incubation at 50 degrees Celsius.</text>
    </temperatureDependence>
</comment>
<comment type="pathway">
    <text evidence="3">Glycan degradation; xylan degradation.</text>
</comment>
<comment type="induction">
    <text evidence="3">Constitutively expressed.</text>
</comment>
<comment type="similarity">
    <text evidence="5">Belongs to the AB hydrolase superfamily.</text>
</comment>
<gene>
    <name evidence="4" type="primary">axeA1</name>
    <name type="ordered locus">PRU_2212</name>
</gene>
<dbReference type="EC" id="3.1.1.72"/>
<dbReference type="EMBL" id="CP002006">
    <property type="protein sequence ID" value="ADE83449.1"/>
    <property type="molecule type" value="Genomic_DNA"/>
</dbReference>
<dbReference type="RefSeq" id="WP_013065432.1">
    <property type="nucleotide sequence ID" value="NC_014033.1"/>
</dbReference>
<dbReference type="SMR" id="D5EV35"/>
<dbReference type="STRING" id="264731.PRU_2212"/>
<dbReference type="ESTHER" id="prer2-axea1">
    <property type="family name" value="BD-FAE"/>
</dbReference>
<dbReference type="GeneID" id="31501757"/>
<dbReference type="KEGG" id="pru:PRU_2212"/>
<dbReference type="eggNOG" id="COG0657">
    <property type="taxonomic scope" value="Bacteria"/>
</dbReference>
<dbReference type="eggNOG" id="COG2755">
    <property type="taxonomic scope" value="Bacteria"/>
</dbReference>
<dbReference type="HOGENOM" id="CLU_043392_0_0_10"/>
<dbReference type="UniPathway" id="UPA00114"/>
<dbReference type="Proteomes" id="UP000000927">
    <property type="component" value="Chromosome"/>
</dbReference>
<dbReference type="GO" id="GO:0046555">
    <property type="term" value="F:acetylxylan esterase activity"/>
    <property type="evidence" value="ECO:0007669"/>
    <property type="project" value="UniProtKB-EC"/>
</dbReference>
<dbReference type="GO" id="GO:0045493">
    <property type="term" value="P:xylan catabolic process"/>
    <property type="evidence" value="ECO:0007669"/>
    <property type="project" value="UniProtKB-UniPathway"/>
</dbReference>
<dbReference type="Gene3D" id="3.40.50.1820">
    <property type="entry name" value="alpha/beta hydrolase"/>
    <property type="match status" value="1"/>
</dbReference>
<dbReference type="Gene3D" id="3.40.50.1110">
    <property type="entry name" value="SGNH hydrolase"/>
    <property type="match status" value="1"/>
</dbReference>
<dbReference type="InterPro" id="IPR029058">
    <property type="entry name" value="AB_hydrolase_fold"/>
</dbReference>
<dbReference type="InterPro" id="IPR050029">
    <property type="entry name" value="AxeA1"/>
</dbReference>
<dbReference type="InterPro" id="IPR049492">
    <property type="entry name" value="BD-FAE-like_dom"/>
</dbReference>
<dbReference type="InterPro" id="IPR050300">
    <property type="entry name" value="GDXG_lipolytic_enzyme"/>
</dbReference>
<dbReference type="InterPro" id="IPR013830">
    <property type="entry name" value="SGNH_hydro"/>
</dbReference>
<dbReference type="InterPro" id="IPR036514">
    <property type="entry name" value="SGNH_hydro_sf"/>
</dbReference>
<dbReference type="NCBIfam" id="NF042968">
    <property type="entry name" value="AcxylEst_AxeA1"/>
    <property type="match status" value="1"/>
</dbReference>
<dbReference type="PANTHER" id="PTHR48081">
    <property type="entry name" value="AB HYDROLASE SUPERFAMILY PROTEIN C4A8.06C"/>
    <property type="match status" value="1"/>
</dbReference>
<dbReference type="PANTHER" id="PTHR48081:SF6">
    <property type="entry name" value="PEPTIDASE S9 PROLYL OLIGOPEPTIDASE CATALYTIC DOMAIN-CONTAINING PROTEIN"/>
    <property type="match status" value="1"/>
</dbReference>
<dbReference type="Pfam" id="PF20434">
    <property type="entry name" value="BD-FAE"/>
    <property type="match status" value="1"/>
</dbReference>
<dbReference type="Pfam" id="PF13472">
    <property type="entry name" value="Lipase_GDSL_2"/>
    <property type="match status" value="1"/>
</dbReference>
<dbReference type="SUPFAM" id="SSF53474">
    <property type="entry name" value="alpha/beta-Hydrolases"/>
    <property type="match status" value="1"/>
</dbReference>
<dbReference type="SUPFAM" id="SSF52266">
    <property type="entry name" value="SGNH hydrolase"/>
    <property type="match status" value="1"/>
</dbReference>
<evidence type="ECO:0000255" key="1"/>
<evidence type="ECO:0000269" key="2">
    <source>
    </source>
</evidence>
<evidence type="ECO:0000269" key="3">
    <source>
    </source>
</evidence>
<evidence type="ECO:0000303" key="4">
    <source>
    </source>
</evidence>
<evidence type="ECO:0000305" key="5"/>
<evidence type="ECO:0000312" key="6">
    <source>
        <dbReference type="EMBL" id="ADE83449.1"/>
    </source>
</evidence>
<organism>
    <name type="scientific">Xylanibacter ruminicola (strain ATCC 19189 / DSM 19721 / CIP 105475 / JCM 8958 / 23)</name>
    <name type="common">Prevotella ruminicola</name>
    <dbReference type="NCBI Taxonomy" id="264731"/>
    <lineage>
        <taxon>Bacteria</taxon>
        <taxon>Pseudomonadati</taxon>
        <taxon>Bacteroidota</taxon>
        <taxon>Bacteroidia</taxon>
        <taxon>Bacteroidales</taxon>
        <taxon>Prevotellaceae</taxon>
        <taxon>Xylanibacter</taxon>
    </lineage>
</organism>
<sequence length="480" mass="53109">MNRKLFMTGLLMLAMTMQAQTAKKFTLNLSDDGKAQMVCFLPENPSGRAIVGVPGGGYSMLSNTHEGYQASDWLNKQGIAYFVVNYRLPHGDRTIPVGDVEQGFRIVRDSAKVWNINPNDVGIMGFSAGGHLSSVISTMSPYEVRPNFSILFYPVISMDERVSHKWSCINFLGKEGYKDPKLIGQYSTQNAVRSHLTPPACIISANDDRLVPVVTNGIQYYSAMRNAGNECSLFIYPSGDHGFGFGTWFKYHDQLLQDLGNWLKSIPAPKEDAIRVACIGNSITDGFGIDMRAKYGYPAQLQGILGDGYWVKNFGVSARTMLNKGDFPYMNEMAWKDALAFKPDVVVIKLGTNDSKPENWQYGSEFRQDLEQMIKALRPDLAQPAKKGKKKAKAAAQPAGPKILLCTPIPAFKPSWNINDKVITDEIIPIQQEVAKQYGLQIIDLHALMLNDGDKVVDDGIHPNEKGAKKMAEIIAAAIK</sequence>
<name>AXEA1_XYLR2</name>
<accession>D5EV35</accession>
<keyword id="KW-0119">Carbohydrate metabolism</keyword>
<keyword id="KW-0378">Hydrolase</keyword>
<keyword id="KW-0624">Polysaccharide degradation</keyword>
<keyword id="KW-1185">Reference proteome</keyword>
<keyword id="KW-0732">Signal</keyword>
<keyword id="KW-0858">Xylan degradation</keyword>
<reference evidence="5 6" key="1">
    <citation type="journal article" date="2010" name="Microb. Ecol.">
        <title>Comparative genome analysis of Prevotella ruminicola and Prevotella bryantii: insights into their environmental niche.</title>
        <authorList>
            <person name="Purushe J."/>
            <person name="Fouts D.E."/>
            <person name="Morrison M."/>
            <person name="White B.A."/>
            <person name="Mackie R.I."/>
            <person name="Coutinho P.M."/>
            <person name="Henrissat B."/>
            <person name="Nelson K.E."/>
        </authorList>
    </citation>
    <scope>NUCLEOTIDE SEQUENCE [LARGE SCALE GENOMIC DNA]</scope>
    <source>
        <strain evidence="2">ATCC 19189 / DSM 19721 / CIP 105475 / JCM 8958 / 23</strain>
    </source>
</reference>
<reference evidence="5" key="2">
    <citation type="journal article" date="2011" name="Appl. Environ. Microbiol.">
        <title>Biochemical characterization and relative expression levels of multiple carbohydrate esterases of the xylanolytic rumen bacterium Prevotella ruminicola 23 grown on an ester-enriched substrate.</title>
        <authorList>
            <person name="Kabel M.A."/>
            <person name="Yeoman C.J."/>
            <person name="Han Y."/>
            <person name="Dodd D."/>
            <person name="Abbas C.A."/>
            <person name="de Bont J.A."/>
            <person name="Morrison M."/>
            <person name="Cann I.K."/>
            <person name="Mackie R.I."/>
        </authorList>
    </citation>
    <scope>FUNCTION</scope>
    <scope>CATALYTIC ACTIVITY</scope>
    <scope>BIOPHYSICOCHEMICAL PROPERTIES</scope>
    <scope>PATHWAY</scope>
    <scope>INDUCTION</scope>
    <scope>IDENTIFICATION BY MASS SPECTROMETRY</scope>
    <scope>SUBSTRATE SPECIFICITY</scope>
    <source>
        <strain evidence="3">ATCC 19189 / DSM 19721 / CIP 105475 / JCM 8958 / 23</strain>
    </source>
</reference>
<proteinExistence type="evidence at protein level"/>
<protein>
    <recommendedName>
        <fullName>Acetylxylan esterase</fullName>
        <ecNumber>3.1.1.72</ecNumber>
    </recommendedName>
</protein>